<evidence type="ECO:0000305" key="1"/>
<sequence>MPRPKKPRTIGCLPKASCFKPNGIPAHNLPRIALEADELEALRLADVLQLHQLEAAQSMGVSRQTFGNIIKRARNKVALCLVEGKVLTLPNQSQDKEKEA</sequence>
<dbReference type="EMBL" id="AE016796">
    <property type="protein sequence ID" value="AAO07859.1"/>
    <property type="molecule type" value="Genomic_DNA"/>
</dbReference>
<dbReference type="SMR" id="Q8D5H3"/>
<dbReference type="KEGG" id="vvu:VV2_0946"/>
<dbReference type="HOGENOM" id="CLU_094511_2_1_6"/>
<dbReference type="Proteomes" id="UP000002275">
    <property type="component" value="Chromosome 2"/>
</dbReference>
<dbReference type="Gene3D" id="1.10.10.10">
    <property type="entry name" value="Winged helix-like DNA-binding domain superfamily/Winged helix DNA-binding domain"/>
    <property type="match status" value="1"/>
</dbReference>
<dbReference type="HAMAP" id="MF_00674">
    <property type="entry name" value="UPF0251"/>
    <property type="match status" value="1"/>
</dbReference>
<dbReference type="InterPro" id="IPR002852">
    <property type="entry name" value="UPF0251"/>
</dbReference>
<dbReference type="InterPro" id="IPR036388">
    <property type="entry name" value="WH-like_DNA-bd_sf"/>
</dbReference>
<dbReference type="PANTHER" id="PTHR37478">
    <property type="match status" value="1"/>
</dbReference>
<dbReference type="PANTHER" id="PTHR37478:SF2">
    <property type="entry name" value="UPF0251 PROTEIN TK0562"/>
    <property type="match status" value="1"/>
</dbReference>
<dbReference type="Pfam" id="PF02001">
    <property type="entry name" value="DUF134"/>
    <property type="match status" value="1"/>
</dbReference>
<comment type="similarity">
    <text evidence="1">Belongs to the UPF0251 family.</text>
</comment>
<feature type="chain" id="PRO_0000147594" description="UPF0251 protein VV2_0946">
    <location>
        <begin position="1"/>
        <end position="100"/>
    </location>
</feature>
<proteinExistence type="inferred from homology"/>
<name>Y4946_VIBVU</name>
<gene>
    <name type="ordered locus">VV2_0946</name>
</gene>
<organism>
    <name type="scientific">Vibrio vulnificus (strain CMCP6)</name>
    <dbReference type="NCBI Taxonomy" id="216895"/>
    <lineage>
        <taxon>Bacteria</taxon>
        <taxon>Pseudomonadati</taxon>
        <taxon>Pseudomonadota</taxon>
        <taxon>Gammaproteobacteria</taxon>
        <taxon>Vibrionales</taxon>
        <taxon>Vibrionaceae</taxon>
        <taxon>Vibrio</taxon>
    </lineage>
</organism>
<reference key="1">
    <citation type="submission" date="2002-12" db="EMBL/GenBank/DDBJ databases">
        <title>Complete genome sequence of Vibrio vulnificus CMCP6.</title>
        <authorList>
            <person name="Rhee J.H."/>
            <person name="Kim S.Y."/>
            <person name="Chung S.S."/>
            <person name="Kim J.J."/>
            <person name="Moon Y.H."/>
            <person name="Jeong H."/>
            <person name="Choy H.E."/>
        </authorList>
    </citation>
    <scope>NUCLEOTIDE SEQUENCE [LARGE SCALE GENOMIC DNA]</scope>
    <source>
        <strain>CMCP6</strain>
    </source>
</reference>
<accession>Q8D5H3</accession>
<protein>
    <recommendedName>
        <fullName>UPF0251 protein VV2_0946</fullName>
    </recommendedName>
</protein>